<comment type="function">
    <text evidence="1">Part of the ABC transporter complex LolCDE involved in the translocation of mature outer membrane-directed lipoproteins, from the inner membrane to the periplasmic chaperone, LolA. Responsible for the formation of the LolA-lipoprotein complex in an ATP-dependent manner.</text>
</comment>
<comment type="subunit">
    <text evidence="1">The complex is composed of two ATP-binding proteins (LolD) and two transmembrane proteins (LolC and LolE).</text>
</comment>
<comment type="subcellular location">
    <subcellularLocation>
        <location evidence="1">Cell inner membrane</location>
        <topology evidence="1">Peripheral membrane protein</topology>
    </subcellularLocation>
</comment>
<comment type="similarity">
    <text evidence="1">Belongs to the ABC transporter superfamily. Lipoprotein translocase (TC 3.A.1.125) family.</text>
</comment>
<sequence length="227" mass="24566">MSDKAVLSCRNLGKSYEEGPESVVVLSGLQLELHPGERVAIVGTSGSGKSTLLNLLGGLDTPSEGSVWLAGEELSALGEKARGLLRNRALGFVYQFHHLLPEFTALENVCMPLLIGRTAIPEARQRATALLERVGLGHRLAHKPSELSGGERQRVAIARALINQPGLVMLDEPTGNLDHHTAQGIQDLMRELSTSSRTAFLIVTHDMSLARQMDRILRLEGGRLVEA</sequence>
<name>LOLD_PSESM</name>
<keyword id="KW-0067">ATP-binding</keyword>
<keyword id="KW-0997">Cell inner membrane</keyword>
<keyword id="KW-1003">Cell membrane</keyword>
<keyword id="KW-0472">Membrane</keyword>
<keyword id="KW-0547">Nucleotide-binding</keyword>
<keyword id="KW-1185">Reference proteome</keyword>
<keyword id="KW-1278">Translocase</keyword>
<keyword id="KW-0813">Transport</keyword>
<evidence type="ECO:0000255" key="1">
    <source>
        <dbReference type="HAMAP-Rule" id="MF_01708"/>
    </source>
</evidence>
<dbReference type="EC" id="7.6.2.-" evidence="1"/>
<dbReference type="EMBL" id="AE016853">
    <property type="protein sequence ID" value="AAO55627.1"/>
    <property type="molecule type" value="Genomic_DNA"/>
</dbReference>
<dbReference type="RefSeq" id="NP_791932.1">
    <property type="nucleotide sequence ID" value="NC_004578.1"/>
</dbReference>
<dbReference type="RefSeq" id="WP_007244212.1">
    <property type="nucleotide sequence ID" value="NC_004578.1"/>
</dbReference>
<dbReference type="SMR" id="Q884I3"/>
<dbReference type="STRING" id="223283.PSPTO_2110"/>
<dbReference type="GeneID" id="61788707"/>
<dbReference type="KEGG" id="pst:PSPTO_2110"/>
<dbReference type="PATRIC" id="fig|223283.9.peg.2141"/>
<dbReference type="eggNOG" id="COG1136">
    <property type="taxonomic scope" value="Bacteria"/>
</dbReference>
<dbReference type="HOGENOM" id="CLU_000604_1_22_6"/>
<dbReference type="OrthoDB" id="9801477at2"/>
<dbReference type="PhylomeDB" id="Q884I3"/>
<dbReference type="Proteomes" id="UP000002515">
    <property type="component" value="Chromosome"/>
</dbReference>
<dbReference type="GO" id="GO:0005886">
    <property type="term" value="C:plasma membrane"/>
    <property type="evidence" value="ECO:0007669"/>
    <property type="project" value="UniProtKB-SubCell"/>
</dbReference>
<dbReference type="GO" id="GO:0005524">
    <property type="term" value="F:ATP binding"/>
    <property type="evidence" value="ECO:0007669"/>
    <property type="project" value="UniProtKB-KW"/>
</dbReference>
<dbReference type="GO" id="GO:0016887">
    <property type="term" value="F:ATP hydrolysis activity"/>
    <property type="evidence" value="ECO:0007669"/>
    <property type="project" value="InterPro"/>
</dbReference>
<dbReference type="GO" id="GO:0022857">
    <property type="term" value="F:transmembrane transporter activity"/>
    <property type="evidence" value="ECO:0007669"/>
    <property type="project" value="TreeGrafter"/>
</dbReference>
<dbReference type="GO" id="GO:0044874">
    <property type="term" value="P:lipoprotein localization to outer membrane"/>
    <property type="evidence" value="ECO:0007669"/>
    <property type="project" value="TreeGrafter"/>
</dbReference>
<dbReference type="GO" id="GO:0089705">
    <property type="term" value="P:protein localization to outer membrane"/>
    <property type="evidence" value="ECO:0007669"/>
    <property type="project" value="TreeGrafter"/>
</dbReference>
<dbReference type="CDD" id="cd03255">
    <property type="entry name" value="ABC_MJ0796_LolCDE_FtsE"/>
    <property type="match status" value="1"/>
</dbReference>
<dbReference type="FunFam" id="3.40.50.300:FF:000230">
    <property type="entry name" value="Lipoprotein-releasing system ATP-binding protein LolD"/>
    <property type="match status" value="1"/>
</dbReference>
<dbReference type="Gene3D" id="3.40.50.300">
    <property type="entry name" value="P-loop containing nucleotide triphosphate hydrolases"/>
    <property type="match status" value="1"/>
</dbReference>
<dbReference type="InterPro" id="IPR003593">
    <property type="entry name" value="AAA+_ATPase"/>
</dbReference>
<dbReference type="InterPro" id="IPR003439">
    <property type="entry name" value="ABC_transporter-like_ATP-bd"/>
</dbReference>
<dbReference type="InterPro" id="IPR017871">
    <property type="entry name" value="ABC_transporter-like_CS"/>
</dbReference>
<dbReference type="InterPro" id="IPR015854">
    <property type="entry name" value="ABC_transpr_LolD-like"/>
</dbReference>
<dbReference type="InterPro" id="IPR011924">
    <property type="entry name" value="LolD_lipo_ATP-bd"/>
</dbReference>
<dbReference type="InterPro" id="IPR017911">
    <property type="entry name" value="MacB-like_ATP-bd"/>
</dbReference>
<dbReference type="InterPro" id="IPR027417">
    <property type="entry name" value="P-loop_NTPase"/>
</dbReference>
<dbReference type="NCBIfam" id="TIGR02211">
    <property type="entry name" value="LolD_lipo_ex"/>
    <property type="match status" value="1"/>
</dbReference>
<dbReference type="PANTHER" id="PTHR24220">
    <property type="entry name" value="IMPORT ATP-BINDING PROTEIN"/>
    <property type="match status" value="1"/>
</dbReference>
<dbReference type="PANTHER" id="PTHR24220:SF689">
    <property type="entry name" value="LIPOPROTEIN-RELEASING SYSTEM ATP-BINDING PROTEIN LOLD"/>
    <property type="match status" value="1"/>
</dbReference>
<dbReference type="Pfam" id="PF00005">
    <property type="entry name" value="ABC_tran"/>
    <property type="match status" value="1"/>
</dbReference>
<dbReference type="SMART" id="SM00382">
    <property type="entry name" value="AAA"/>
    <property type="match status" value="1"/>
</dbReference>
<dbReference type="SUPFAM" id="SSF52540">
    <property type="entry name" value="P-loop containing nucleoside triphosphate hydrolases"/>
    <property type="match status" value="1"/>
</dbReference>
<dbReference type="PROSITE" id="PS00211">
    <property type="entry name" value="ABC_TRANSPORTER_1"/>
    <property type="match status" value="1"/>
</dbReference>
<dbReference type="PROSITE" id="PS50893">
    <property type="entry name" value="ABC_TRANSPORTER_2"/>
    <property type="match status" value="1"/>
</dbReference>
<dbReference type="PROSITE" id="PS51244">
    <property type="entry name" value="LOLD"/>
    <property type="match status" value="1"/>
</dbReference>
<protein>
    <recommendedName>
        <fullName evidence="1">Lipoprotein-releasing system ATP-binding protein LolD</fullName>
        <ecNumber evidence="1">7.6.2.-</ecNumber>
    </recommendedName>
</protein>
<feature type="chain" id="PRO_0000092450" description="Lipoprotein-releasing system ATP-binding protein LolD">
    <location>
        <begin position="1"/>
        <end position="227"/>
    </location>
</feature>
<feature type="domain" description="ABC transporter" evidence="1">
    <location>
        <begin position="7"/>
        <end position="227"/>
    </location>
</feature>
<feature type="binding site" evidence="1">
    <location>
        <begin position="43"/>
        <end position="50"/>
    </location>
    <ligand>
        <name>ATP</name>
        <dbReference type="ChEBI" id="CHEBI:30616"/>
    </ligand>
</feature>
<gene>
    <name evidence="1" type="primary">lolD</name>
    <name type="ordered locus">PSPTO_2110</name>
</gene>
<accession>Q884I3</accession>
<organism>
    <name type="scientific">Pseudomonas syringae pv. tomato (strain ATCC BAA-871 / DC3000)</name>
    <dbReference type="NCBI Taxonomy" id="223283"/>
    <lineage>
        <taxon>Bacteria</taxon>
        <taxon>Pseudomonadati</taxon>
        <taxon>Pseudomonadota</taxon>
        <taxon>Gammaproteobacteria</taxon>
        <taxon>Pseudomonadales</taxon>
        <taxon>Pseudomonadaceae</taxon>
        <taxon>Pseudomonas</taxon>
    </lineage>
</organism>
<proteinExistence type="inferred from homology"/>
<reference key="1">
    <citation type="journal article" date="2003" name="Proc. Natl. Acad. Sci. U.S.A.">
        <title>The complete genome sequence of the Arabidopsis and tomato pathogen Pseudomonas syringae pv. tomato DC3000.</title>
        <authorList>
            <person name="Buell C.R."/>
            <person name="Joardar V."/>
            <person name="Lindeberg M."/>
            <person name="Selengut J."/>
            <person name="Paulsen I.T."/>
            <person name="Gwinn M.L."/>
            <person name="Dodson R.J."/>
            <person name="DeBoy R.T."/>
            <person name="Durkin A.S."/>
            <person name="Kolonay J.F."/>
            <person name="Madupu R."/>
            <person name="Daugherty S.C."/>
            <person name="Brinkac L.M."/>
            <person name="Beanan M.J."/>
            <person name="Haft D.H."/>
            <person name="Nelson W.C."/>
            <person name="Davidsen T.M."/>
            <person name="Zafar N."/>
            <person name="Zhou L."/>
            <person name="Liu J."/>
            <person name="Yuan Q."/>
            <person name="Khouri H.M."/>
            <person name="Fedorova N.B."/>
            <person name="Tran B."/>
            <person name="Russell D."/>
            <person name="Berry K.J."/>
            <person name="Utterback T.R."/>
            <person name="Van Aken S.E."/>
            <person name="Feldblyum T.V."/>
            <person name="D'Ascenzo M."/>
            <person name="Deng W.-L."/>
            <person name="Ramos A.R."/>
            <person name="Alfano J.R."/>
            <person name="Cartinhour S."/>
            <person name="Chatterjee A.K."/>
            <person name="Delaney T.P."/>
            <person name="Lazarowitz S.G."/>
            <person name="Martin G.B."/>
            <person name="Schneider D.J."/>
            <person name="Tang X."/>
            <person name="Bender C.L."/>
            <person name="White O."/>
            <person name="Fraser C.M."/>
            <person name="Collmer A."/>
        </authorList>
    </citation>
    <scope>NUCLEOTIDE SEQUENCE [LARGE SCALE GENOMIC DNA]</scope>
    <source>
        <strain>ATCC BAA-871 / DC3000</strain>
    </source>
</reference>